<keyword id="KW-0012">Acyltransferase</keyword>
<keyword id="KW-0963">Cytoplasm</keyword>
<keyword id="KW-0275">Fatty acid biosynthesis</keyword>
<keyword id="KW-0276">Fatty acid metabolism</keyword>
<keyword id="KW-0444">Lipid biosynthesis</keyword>
<keyword id="KW-0443">Lipid metabolism</keyword>
<keyword id="KW-0511">Multifunctional enzyme</keyword>
<keyword id="KW-1185">Reference proteome</keyword>
<keyword id="KW-0808">Transferase</keyword>
<sequence>MYSKILGTGSYLPAQIRSNADLEKMVDTSDEWILARTGISERRIAGEDESVATMAHLASVNAIEMAGIDKNDIDLIILATSTPTYSFPSAACEVQGLLGIQGCPAFDLSAACSGFVYALSVADQHIKTGMAKNVLVIGSDAVSHTCDPEDRSTIILFGDGAGAVVLGQSEEPGIISTHLHADGKFGELLSLPVPSRKNEEADKWLYMAGNEVFKVAVTQLSNLVKETLQENQMDKSELDWLVPHQANLRIIKATAKKLSMSMDQVVVTLDRHGNTSAATVPTALDEAVRDGRIQRGQTLLLEAFGGGFTWGSALVKF</sequence>
<gene>
    <name evidence="1" type="primary">fabH</name>
    <name type="ordered locus">VF_1742</name>
</gene>
<reference key="1">
    <citation type="journal article" date="2005" name="Proc. Natl. Acad. Sci. U.S.A.">
        <title>Complete genome sequence of Vibrio fischeri: a symbiotic bacterium with pathogenic congeners.</title>
        <authorList>
            <person name="Ruby E.G."/>
            <person name="Urbanowski M."/>
            <person name="Campbell J."/>
            <person name="Dunn A."/>
            <person name="Faini M."/>
            <person name="Gunsalus R."/>
            <person name="Lostroh P."/>
            <person name="Lupp C."/>
            <person name="McCann J."/>
            <person name="Millikan D."/>
            <person name="Schaefer A."/>
            <person name="Stabb E."/>
            <person name="Stevens A."/>
            <person name="Visick K."/>
            <person name="Whistler C."/>
            <person name="Greenberg E.P."/>
        </authorList>
    </citation>
    <scope>NUCLEOTIDE SEQUENCE [LARGE SCALE GENOMIC DNA]</scope>
    <source>
        <strain>ATCC 700601 / ES114</strain>
    </source>
</reference>
<organism>
    <name type="scientific">Aliivibrio fischeri (strain ATCC 700601 / ES114)</name>
    <name type="common">Vibrio fischeri</name>
    <dbReference type="NCBI Taxonomy" id="312309"/>
    <lineage>
        <taxon>Bacteria</taxon>
        <taxon>Pseudomonadati</taxon>
        <taxon>Pseudomonadota</taxon>
        <taxon>Gammaproteobacteria</taxon>
        <taxon>Vibrionales</taxon>
        <taxon>Vibrionaceae</taxon>
        <taxon>Aliivibrio</taxon>
    </lineage>
</organism>
<protein>
    <recommendedName>
        <fullName evidence="1">Beta-ketoacyl-[acyl-carrier-protein] synthase III</fullName>
        <shortName evidence="1">Beta-ketoacyl-ACP synthase III</shortName>
        <shortName evidence="1">KAS III</shortName>
        <ecNumber evidence="1">2.3.1.180</ecNumber>
    </recommendedName>
    <alternativeName>
        <fullName evidence="1">3-oxoacyl-[acyl-carrier-protein] synthase 3</fullName>
    </alternativeName>
    <alternativeName>
        <fullName evidence="1">3-oxoacyl-[acyl-carrier-protein] synthase III</fullName>
    </alternativeName>
</protein>
<feature type="chain" id="PRO_1000056441" description="Beta-ketoacyl-[acyl-carrier-protein] synthase III">
    <location>
        <begin position="1"/>
        <end position="317"/>
    </location>
</feature>
<feature type="region of interest" description="ACP-binding" evidence="1">
    <location>
        <begin position="245"/>
        <end position="249"/>
    </location>
</feature>
<feature type="active site" evidence="1">
    <location>
        <position position="112"/>
    </location>
</feature>
<feature type="active site" evidence="1">
    <location>
        <position position="244"/>
    </location>
</feature>
<feature type="active site" evidence="1">
    <location>
        <position position="274"/>
    </location>
</feature>
<proteinExistence type="inferred from homology"/>
<name>FABH_ALIF1</name>
<comment type="function">
    <text evidence="1">Catalyzes the condensation reaction of fatty acid synthesis by the addition to an acyl acceptor of two carbons from malonyl-ACP. Catalyzes the first condensation reaction which initiates fatty acid synthesis and may therefore play a role in governing the total rate of fatty acid production. Possesses both acetoacetyl-ACP synthase and acetyl transacylase activities. Its substrate specificity determines the biosynthesis of branched-chain and/or straight-chain of fatty acids.</text>
</comment>
<comment type="catalytic activity">
    <reaction evidence="1">
        <text>malonyl-[ACP] + acetyl-CoA + H(+) = 3-oxobutanoyl-[ACP] + CO2 + CoA</text>
        <dbReference type="Rhea" id="RHEA:12080"/>
        <dbReference type="Rhea" id="RHEA-COMP:9623"/>
        <dbReference type="Rhea" id="RHEA-COMP:9625"/>
        <dbReference type="ChEBI" id="CHEBI:15378"/>
        <dbReference type="ChEBI" id="CHEBI:16526"/>
        <dbReference type="ChEBI" id="CHEBI:57287"/>
        <dbReference type="ChEBI" id="CHEBI:57288"/>
        <dbReference type="ChEBI" id="CHEBI:78449"/>
        <dbReference type="ChEBI" id="CHEBI:78450"/>
        <dbReference type="EC" id="2.3.1.180"/>
    </reaction>
</comment>
<comment type="pathway">
    <text evidence="1">Lipid metabolism; fatty acid biosynthesis.</text>
</comment>
<comment type="subunit">
    <text evidence="1">Homodimer.</text>
</comment>
<comment type="subcellular location">
    <subcellularLocation>
        <location evidence="1">Cytoplasm</location>
    </subcellularLocation>
</comment>
<comment type="domain">
    <text evidence="1">The last Arg residue of the ACP-binding site is essential for the weak association between ACP/AcpP and FabH.</text>
</comment>
<comment type="similarity">
    <text evidence="1">Belongs to the thiolase-like superfamily. FabH family.</text>
</comment>
<evidence type="ECO:0000255" key="1">
    <source>
        <dbReference type="HAMAP-Rule" id="MF_01815"/>
    </source>
</evidence>
<accession>Q5E409</accession>
<dbReference type="EC" id="2.3.1.180" evidence="1"/>
<dbReference type="EMBL" id="CP000020">
    <property type="protein sequence ID" value="AAW86237.1"/>
    <property type="molecule type" value="Genomic_DNA"/>
</dbReference>
<dbReference type="RefSeq" id="WP_005420128.1">
    <property type="nucleotide sequence ID" value="NZ_CAWLES010000001.1"/>
</dbReference>
<dbReference type="RefSeq" id="YP_205125.1">
    <property type="nucleotide sequence ID" value="NC_006840.2"/>
</dbReference>
<dbReference type="SMR" id="Q5E409"/>
<dbReference type="STRING" id="312309.VF_1742"/>
<dbReference type="EnsemblBacteria" id="AAW86237">
    <property type="protein sequence ID" value="AAW86237"/>
    <property type="gene ID" value="VF_1742"/>
</dbReference>
<dbReference type="GeneID" id="54164441"/>
<dbReference type="KEGG" id="vfi:VF_1742"/>
<dbReference type="PATRIC" id="fig|312309.11.peg.1768"/>
<dbReference type="eggNOG" id="COG0332">
    <property type="taxonomic scope" value="Bacteria"/>
</dbReference>
<dbReference type="HOGENOM" id="CLU_039592_4_1_6"/>
<dbReference type="OrthoDB" id="9815506at2"/>
<dbReference type="UniPathway" id="UPA00094"/>
<dbReference type="Proteomes" id="UP000000537">
    <property type="component" value="Chromosome I"/>
</dbReference>
<dbReference type="GO" id="GO:0005737">
    <property type="term" value="C:cytoplasm"/>
    <property type="evidence" value="ECO:0007669"/>
    <property type="project" value="UniProtKB-SubCell"/>
</dbReference>
<dbReference type="GO" id="GO:0004315">
    <property type="term" value="F:3-oxoacyl-[acyl-carrier-protein] synthase activity"/>
    <property type="evidence" value="ECO:0007669"/>
    <property type="project" value="InterPro"/>
</dbReference>
<dbReference type="GO" id="GO:0033818">
    <property type="term" value="F:beta-ketoacyl-acyl-carrier-protein synthase III activity"/>
    <property type="evidence" value="ECO:0007669"/>
    <property type="project" value="UniProtKB-UniRule"/>
</dbReference>
<dbReference type="GO" id="GO:0006633">
    <property type="term" value="P:fatty acid biosynthetic process"/>
    <property type="evidence" value="ECO:0007669"/>
    <property type="project" value="UniProtKB-UniRule"/>
</dbReference>
<dbReference type="CDD" id="cd00830">
    <property type="entry name" value="KAS_III"/>
    <property type="match status" value="1"/>
</dbReference>
<dbReference type="FunFam" id="3.40.47.10:FF:000004">
    <property type="entry name" value="3-oxoacyl-[acyl-carrier-protein] synthase 3"/>
    <property type="match status" value="1"/>
</dbReference>
<dbReference type="Gene3D" id="3.40.47.10">
    <property type="match status" value="1"/>
</dbReference>
<dbReference type="HAMAP" id="MF_01815">
    <property type="entry name" value="FabH"/>
    <property type="match status" value="1"/>
</dbReference>
<dbReference type="InterPro" id="IPR013747">
    <property type="entry name" value="ACP_syn_III_C"/>
</dbReference>
<dbReference type="InterPro" id="IPR013751">
    <property type="entry name" value="ACP_syn_III_N"/>
</dbReference>
<dbReference type="InterPro" id="IPR004655">
    <property type="entry name" value="FabH"/>
</dbReference>
<dbReference type="InterPro" id="IPR016039">
    <property type="entry name" value="Thiolase-like"/>
</dbReference>
<dbReference type="NCBIfam" id="TIGR00747">
    <property type="entry name" value="fabH"/>
    <property type="match status" value="1"/>
</dbReference>
<dbReference type="NCBIfam" id="NF006829">
    <property type="entry name" value="PRK09352.1"/>
    <property type="match status" value="1"/>
</dbReference>
<dbReference type="PANTHER" id="PTHR43091">
    <property type="entry name" value="3-OXOACYL-[ACYL-CARRIER-PROTEIN] SYNTHASE"/>
    <property type="match status" value="1"/>
</dbReference>
<dbReference type="PANTHER" id="PTHR43091:SF1">
    <property type="entry name" value="BETA-KETOACYL-[ACYL-CARRIER-PROTEIN] SYNTHASE III, CHLOROPLASTIC"/>
    <property type="match status" value="1"/>
</dbReference>
<dbReference type="Pfam" id="PF08545">
    <property type="entry name" value="ACP_syn_III"/>
    <property type="match status" value="1"/>
</dbReference>
<dbReference type="Pfam" id="PF08541">
    <property type="entry name" value="ACP_syn_III_C"/>
    <property type="match status" value="1"/>
</dbReference>
<dbReference type="SUPFAM" id="SSF53901">
    <property type="entry name" value="Thiolase-like"/>
    <property type="match status" value="1"/>
</dbReference>